<name>TDH_ANADF</name>
<protein>
    <recommendedName>
        <fullName evidence="1">L-threonine 3-dehydrogenase</fullName>
        <shortName evidence="1">TDH</shortName>
        <ecNumber evidence="1">1.1.1.103</ecNumber>
    </recommendedName>
</protein>
<reference key="1">
    <citation type="journal article" date="2015" name="Genome Announc.">
        <title>Complete genome sequence of Anaeromyxobacter sp. Fw109-5, an anaerobic, metal-reducing bacterium isolated from a contaminated subsurface environment.</title>
        <authorList>
            <person name="Hwang C."/>
            <person name="Copeland A."/>
            <person name="Lucas S."/>
            <person name="Lapidus A."/>
            <person name="Barry K."/>
            <person name="Glavina Del Rio T."/>
            <person name="Dalin E."/>
            <person name="Tice H."/>
            <person name="Pitluck S."/>
            <person name="Sims D."/>
            <person name="Brettin T."/>
            <person name="Bruce D.C."/>
            <person name="Detter J.C."/>
            <person name="Han C.S."/>
            <person name="Schmutz J."/>
            <person name="Larimer F.W."/>
            <person name="Land M.L."/>
            <person name="Hauser L.J."/>
            <person name="Kyrpides N."/>
            <person name="Lykidis A."/>
            <person name="Richardson P."/>
            <person name="Belieav A."/>
            <person name="Sanford R.A."/>
            <person name="Loeffler F.E."/>
            <person name="Fields M.W."/>
        </authorList>
    </citation>
    <scope>NUCLEOTIDE SEQUENCE [LARGE SCALE GENOMIC DNA]</scope>
    <source>
        <strain>Fw109-5</strain>
    </source>
</reference>
<feature type="chain" id="PRO_1000051615" description="L-threonine 3-dehydrogenase">
    <location>
        <begin position="1"/>
        <end position="343"/>
    </location>
</feature>
<feature type="active site" description="Charge relay system" evidence="1">
    <location>
        <position position="41"/>
    </location>
</feature>
<feature type="active site" description="Charge relay system" evidence="1">
    <location>
        <position position="44"/>
    </location>
</feature>
<feature type="binding site" evidence="1">
    <location>
        <position position="39"/>
    </location>
    <ligand>
        <name>Zn(2+)</name>
        <dbReference type="ChEBI" id="CHEBI:29105"/>
        <label>1</label>
        <note>catalytic</note>
    </ligand>
</feature>
<feature type="binding site" evidence="1">
    <location>
        <position position="64"/>
    </location>
    <ligand>
        <name>Zn(2+)</name>
        <dbReference type="ChEBI" id="CHEBI:29105"/>
        <label>1</label>
        <note>catalytic</note>
    </ligand>
</feature>
<feature type="binding site" evidence="1">
    <location>
        <position position="65"/>
    </location>
    <ligand>
        <name>Zn(2+)</name>
        <dbReference type="ChEBI" id="CHEBI:29105"/>
        <label>1</label>
        <note>catalytic</note>
    </ligand>
</feature>
<feature type="binding site" evidence="1">
    <location>
        <position position="94"/>
    </location>
    <ligand>
        <name>Zn(2+)</name>
        <dbReference type="ChEBI" id="CHEBI:29105"/>
        <label>2</label>
    </ligand>
</feature>
<feature type="binding site" evidence="1">
    <location>
        <position position="97"/>
    </location>
    <ligand>
        <name>Zn(2+)</name>
        <dbReference type="ChEBI" id="CHEBI:29105"/>
        <label>2</label>
    </ligand>
</feature>
<feature type="binding site" evidence="1">
    <location>
        <position position="100"/>
    </location>
    <ligand>
        <name>Zn(2+)</name>
        <dbReference type="ChEBI" id="CHEBI:29105"/>
        <label>2</label>
    </ligand>
</feature>
<feature type="binding site" evidence="1">
    <location>
        <position position="108"/>
    </location>
    <ligand>
        <name>Zn(2+)</name>
        <dbReference type="ChEBI" id="CHEBI:29105"/>
        <label>2</label>
    </ligand>
</feature>
<feature type="binding site" evidence="1">
    <location>
        <position position="176"/>
    </location>
    <ligand>
        <name>NAD(+)</name>
        <dbReference type="ChEBI" id="CHEBI:57540"/>
    </ligand>
</feature>
<feature type="binding site" evidence="1">
    <location>
        <position position="196"/>
    </location>
    <ligand>
        <name>NAD(+)</name>
        <dbReference type="ChEBI" id="CHEBI:57540"/>
    </ligand>
</feature>
<feature type="binding site" evidence="1">
    <location>
        <position position="201"/>
    </location>
    <ligand>
        <name>NAD(+)</name>
        <dbReference type="ChEBI" id="CHEBI:57540"/>
    </ligand>
</feature>
<feature type="binding site" evidence="1">
    <location>
        <begin position="263"/>
        <end position="265"/>
    </location>
    <ligand>
        <name>NAD(+)</name>
        <dbReference type="ChEBI" id="CHEBI:57540"/>
    </ligand>
</feature>
<feature type="binding site" evidence="1">
    <location>
        <begin position="287"/>
        <end position="288"/>
    </location>
    <ligand>
        <name>NAD(+)</name>
        <dbReference type="ChEBI" id="CHEBI:57540"/>
    </ligand>
</feature>
<feature type="site" description="Important for catalytic activity for the proton relay mechanism but does not participate directly in the coordination of zinc atom" evidence="1">
    <location>
        <position position="149"/>
    </location>
</feature>
<keyword id="KW-0963">Cytoplasm</keyword>
<keyword id="KW-0479">Metal-binding</keyword>
<keyword id="KW-0520">NAD</keyword>
<keyword id="KW-0560">Oxidoreductase</keyword>
<keyword id="KW-1185">Reference proteome</keyword>
<keyword id="KW-0862">Zinc</keyword>
<gene>
    <name evidence="1" type="primary">tdh</name>
    <name type="ordered locus">Anae109_2931</name>
</gene>
<proteinExistence type="inferred from homology"/>
<accession>A7HEI5</accession>
<evidence type="ECO:0000255" key="1">
    <source>
        <dbReference type="HAMAP-Rule" id="MF_00627"/>
    </source>
</evidence>
<organism>
    <name type="scientific">Anaeromyxobacter sp. (strain Fw109-5)</name>
    <dbReference type="NCBI Taxonomy" id="404589"/>
    <lineage>
        <taxon>Bacteria</taxon>
        <taxon>Pseudomonadati</taxon>
        <taxon>Myxococcota</taxon>
        <taxon>Myxococcia</taxon>
        <taxon>Myxococcales</taxon>
        <taxon>Cystobacterineae</taxon>
        <taxon>Anaeromyxobacteraceae</taxon>
        <taxon>Anaeromyxobacter</taxon>
    </lineage>
</organism>
<comment type="function">
    <text evidence="1">Catalyzes the NAD(+)-dependent oxidation of L-threonine to 2-amino-3-ketobutyrate.</text>
</comment>
<comment type="catalytic activity">
    <reaction evidence="1">
        <text>L-threonine + NAD(+) = (2S)-2-amino-3-oxobutanoate + NADH + H(+)</text>
        <dbReference type="Rhea" id="RHEA:13161"/>
        <dbReference type="ChEBI" id="CHEBI:15378"/>
        <dbReference type="ChEBI" id="CHEBI:57540"/>
        <dbReference type="ChEBI" id="CHEBI:57926"/>
        <dbReference type="ChEBI" id="CHEBI:57945"/>
        <dbReference type="ChEBI" id="CHEBI:78948"/>
        <dbReference type="EC" id="1.1.1.103"/>
    </reaction>
</comment>
<comment type="cofactor">
    <cofactor evidence="1">
        <name>Zn(2+)</name>
        <dbReference type="ChEBI" id="CHEBI:29105"/>
    </cofactor>
    <text evidence="1">Binds 2 Zn(2+) ions per subunit.</text>
</comment>
<comment type="pathway">
    <text evidence="1">Amino-acid degradation; L-threonine degradation via oxydo-reductase pathway; glycine from L-threonine: step 1/2.</text>
</comment>
<comment type="subunit">
    <text evidence="1">Homotetramer.</text>
</comment>
<comment type="subcellular location">
    <subcellularLocation>
        <location evidence="1">Cytoplasm</location>
    </subcellularLocation>
</comment>
<comment type="similarity">
    <text evidence="1">Belongs to the zinc-containing alcohol dehydrogenase family.</text>
</comment>
<sequence length="343" mass="37693">MKALVKSRRAEGIWMVHDAPVPEVGVHDVRIRVRKSAICGTDVHIYNWDEWSQRTIPVPMIVGHEYVGVVDAVGGEVEAFHPGDRVSGEGHVTCGFCRNCRAGRRHLCRHTIGVGVNRPGSFAEYVVIPADNVYRIPDDIPDEVAAIFDPYGNATHTALSFELVGEDVLVTGAGPIGVMAVSIARHVGARHVVVTDVNDYRLGLARRMGATRAVNVAREDLRAVMKDLGMKEGFDVGLEMSGNGRAFRQMLEAMNHGAKVALLGIMPGEEAIDWSQVVFKGLVLKGIYGREMYETWYKMVAMLQSGLDISPVITHRFPIDEFQQGFDVMRSGQSGKVVLDWGT</sequence>
<dbReference type="EC" id="1.1.1.103" evidence="1"/>
<dbReference type="EMBL" id="CP000769">
    <property type="protein sequence ID" value="ABS27131.1"/>
    <property type="molecule type" value="Genomic_DNA"/>
</dbReference>
<dbReference type="RefSeq" id="WP_012097735.1">
    <property type="nucleotide sequence ID" value="NC_009675.1"/>
</dbReference>
<dbReference type="SMR" id="A7HEI5"/>
<dbReference type="STRING" id="404589.Anae109_2931"/>
<dbReference type="KEGG" id="afw:Anae109_2931"/>
<dbReference type="eggNOG" id="COG1063">
    <property type="taxonomic scope" value="Bacteria"/>
</dbReference>
<dbReference type="HOGENOM" id="CLU_026673_11_0_7"/>
<dbReference type="OrthoDB" id="5484143at2"/>
<dbReference type="UniPathway" id="UPA00046">
    <property type="reaction ID" value="UER00505"/>
</dbReference>
<dbReference type="Proteomes" id="UP000006382">
    <property type="component" value="Chromosome"/>
</dbReference>
<dbReference type="GO" id="GO:0005737">
    <property type="term" value="C:cytoplasm"/>
    <property type="evidence" value="ECO:0007669"/>
    <property type="project" value="UniProtKB-SubCell"/>
</dbReference>
<dbReference type="GO" id="GO:0008743">
    <property type="term" value="F:L-threonine 3-dehydrogenase activity"/>
    <property type="evidence" value="ECO:0007669"/>
    <property type="project" value="UniProtKB-UniRule"/>
</dbReference>
<dbReference type="GO" id="GO:0008270">
    <property type="term" value="F:zinc ion binding"/>
    <property type="evidence" value="ECO:0007669"/>
    <property type="project" value="UniProtKB-UniRule"/>
</dbReference>
<dbReference type="GO" id="GO:0019518">
    <property type="term" value="P:L-threonine catabolic process to glycine"/>
    <property type="evidence" value="ECO:0007669"/>
    <property type="project" value="UniProtKB-UniPathway"/>
</dbReference>
<dbReference type="Gene3D" id="3.90.180.10">
    <property type="entry name" value="Medium-chain alcohol dehydrogenases, catalytic domain"/>
    <property type="match status" value="1"/>
</dbReference>
<dbReference type="Gene3D" id="3.40.50.720">
    <property type="entry name" value="NAD(P)-binding Rossmann-like Domain"/>
    <property type="match status" value="1"/>
</dbReference>
<dbReference type="HAMAP" id="MF_00627">
    <property type="entry name" value="Thr_dehydrog"/>
    <property type="match status" value="1"/>
</dbReference>
<dbReference type="InterPro" id="IPR013149">
    <property type="entry name" value="ADH-like_C"/>
</dbReference>
<dbReference type="InterPro" id="IPR013154">
    <property type="entry name" value="ADH-like_N"/>
</dbReference>
<dbReference type="InterPro" id="IPR002328">
    <property type="entry name" value="ADH_Zn_CS"/>
</dbReference>
<dbReference type="InterPro" id="IPR011032">
    <property type="entry name" value="GroES-like_sf"/>
</dbReference>
<dbReference type="InterPro" id="IPR004627">
    <property type="entry name" value="L-Threonine_3-DHase"/>
</dbReference>
<dbReference type="InterPro" id="IPR036291">
    <property type="entry name" value="NAD(P)-bd_dom_sf"/>
</dbReference>
<dbReference type="InterPro" id="IPR020843">
    <property type="entry name" value="PKS_ER"/>
</dbReference>
<dbReference type="InterPro" id="IPR050129">
    <property type="entry name" value="Zn_alcohol_dh"/>
</dbReference>
<dbReference type="NCBIfam" id="NF003808">
    <property type="entry name" value="PRK05396.1"/>
    <property type="match status" value="1"/>
</dbReference>
<dbReference type="NCBIfam" id="TIGR00692">
    <property type="entry name" value="tdh"/>
    <property type="match status" value="1"/>
</dbReference>
<dbReference type="PANTHER" id="PTHR43401">
    <property type="entry name" value="L-THREONINE 3-DEHYDROGENASE"/>
    <property type="match status" value="1"/>
</dbReference>
<dbReference type="PANTHER" id="PTHR43401:SF2">
    <property type="entry name" value="L-THREONINE 3-DEHYDROGENASE"/>
    <property type="match status" value="1"/>
</dbReference>
<dbReference type="Pfam" id="PF08240">
    <property type="entry name" value="ADH_N"/>
    <property type="match status" value="1"/>
</dbReference>
<dbReference type="Pfam" id="PF00107">
    <property type="entry name" value="ADH_zinc_N"/>
    <property type="match status" value="1"/>
</dbReference>
<dbReference type="SMART" id="SM00829">
    <property type="entry name" value="PKS_ER"/>
    <property type="match status" value="1"/>
</dbReference>
<dbReference type="SUPFAM" id="SSF50129">
    <property type="entry name" value="GroES-like"/>
    <property type="match status" value="1"/>
</dbReference>
<dbReference type="SUPFAM" id="SSF51735">
    <property type="entry name" value="NAD(P)-binding Rossmann-fold domains"/>
    <property type="match status" value="1"/>
</dbReference>
<dbReference type="PROSITE" id="PS00059">
    <property type="entry name" value="ADH_ZINC"/>
    <property type="match status" value="1"/>
</dbReference>